<sequence>MISSCVTRCFGRGKCLPGPATASIYQTIRCISTNSNKAAEAPIFPKLEDVKMHELIGNNNFGKKTYYVERSRTGNLPVYSAYKNGGNKIITEIRKIEGDVIQLRNDLQEQLPFIPKKSWSVVMQSKKIIIKGNAVEAVKRVLTKKF</sequence>
<reference key="1">
    <citation type="journal article" date="1992" name="Nature">
        <title>The complete DNA sequence of yeast chromosome III.</title>
        <authorList>
            <person name="Oliver S.G."/>
            <person name="van der Aart Q.J.M."/>
            <person name="Agostoni-Carbone M.L."/>
            <person name="Aigle M."/>
            <person name="Alberghina L."/>
            <person name="Alexandraki D."/>
            <person name="Antoine G."/>
            <person name="Anwar R."/>
            <person name="Ballesta J.P.G."/>
            <person name="Benit P."/>
            <person name="Berben G."/>
            <person name="Bergantino E."/>
            <person name="Biteau N."/>
            <person name="Bolle P.-A."/>
            <person name="Bolotin-Fukuhara M."/>
            <person name="Brown A."/>
            <person name="Brown A.J.P."/>
            <person name="Buhler J.-M."/>
            <person name="Carcano C."/>
            <person name="Carignani G."/>
            <person name="Cederberg H."/>
            <person name="Chanet R."/>
            <person name="Contreras R."/>
            <person name="Crouzet M."/>
            <person name="Daignan-Fornier B."/>
            <person name="Defoor E."/>
            <person name="Delgado M.D."/>
            <person name="Demolder J."/>
            <person name="Doira C."/>
            <person name="Dubois E."/>
            <person name="Dujon B."/>
            <person name="Duesterhoeft A."/>
            <person name="Erdmann D."/>
            <person name="Esteban M."/>
            <person name="Fabre F."/>
            <person name="Fairhead C."/>
            <person name="Faye G."/>
            <person name="Feldmann H."/>
            <person name="Fiers W."/>
            <person name="Francingues-Gaillard M.-C."/>
            <person name="Franco L."/>
            <person name="Frontali L."/>
            <person name="Fukuhara H."/>
            <person name="Fuller L.J."/>
            <person name="Galland P."/>
            <person name="Gent M.E."/>
            <person name="Gigot D."/>
            <person name="Gilliquet V."/>
            <person name="Glansdorff N."/>
            <person name="Goffeau A."/>
            <person name="Grenson M."/>
            <person name="Grisanti P."/>
            <person name="Grivell L.A."/>
            <person name="de Haan M."/>
            <person name="Haasemann M."/>
            <person name="Hatat D."/>
            <person name="Hoenicka J."/>
            <person name="Hegemann J.H."/>
            <person name="Herbert C.J."/>
            <person name="Hilger F."/>
            <person name="Hohmann S."/>
            <person name="Hollenberg C.P."/>
            <person name="Huse K."/>
            <person name="Iborra F."/>
            <person name="Indge K.J."/>
            <person name="Isono K."/>
            <person name="Jacq C."/>
            <person name="Jacquet M."/>
            <person name="James C.M."/>
            <person name="Jauniaux J.-C."/>
            <person name="Jia Y."/>
            <person name="Jimenez A."/>
            <person name="Kelly A."/>
            <person name="Kleinhans U."/>
            <person name="Kreisl P."/>
            <person name="Lanfranchi G."/>
            <person name="Lewis C."/>
            <person name="van der Linden C.G."/>
            <person name="Lucchini G."/>
            <person name="Lutzenkirchen K."/>
            <person name="Maat M.J."/>
            <person name="Mallet L."/>
            <person name="Mannhaupt G."/>
            <person name="Martegani E."/>
            <person name="Mathieu A."/>
            <person name="Maurer C.T.C."/>
            <person name="McConnell D."/>
            <person name="McKee R.A."/>
            <person name="Messenguy F."/>
            <person name="Mewes H.-W."/>
            <person name="Molemans F."/>
            <person name="Montague M.A."/>
            <person name="Muzi Falconi M."/>
            <person name="Navas L."/>
            <person name="Newlon C.S."/>
            <person name="Noone D."/>
            <person name="Pallier C."/>
            <person name="Panzeri L."/>
            <person name="Pearson B.M."/>
            <person name="Perea J."/>
            <person name="Philippsen P."/>
            <person name="Pierard A."/>
            <person name="Planta R.J."/>
            <person name="Plevani P."/>
            <person name="Poetsch B."/>
            <person name="Pohl F.M."/>
            <person name="Purnelle B."/>
            <person name="Ramezani Rad M."/>
            <person name="Rasmussen S.W."/>
            <person name="Raynal A."/>
            <person name="Remacha M.A."/>
            <person name="Richterich P."/>
            <person name="Roberts A.B."/>
            <person name="Rodriguez F."/>
            <person name="Sanz E."/>
            <person name="Schaaff-Gerstenschlaeger I."/>
            <person name="Scherens B."/>
            <person name="Schweitzer B."/>
            <person name="Shu Y."/>
            <person name="Skala J."/>
            <person name="Slonimski P.P."/>
            <person name="Sor F."/>
            <person name="Soustelle C."/>
            <person name="Spiegelberg R."/>
            <person name="Stateva L.I."/>
            <person name="Steensma H.Y."/>
            <person name="Steiner S."/>
            <person name="Thierry A."/>
            <person name="Thireos G."/>
            <person name="Tzermia M."/>
            <person name="Urrestarazu L.A."/>
            <person name="Valle G."/>
            <person name="Vetter I."/>
            <person name="van Vliet-Reedijk J.C."/>
            <person name="Voet M."/>
            <person name="Volckaert G."/>
            <person name="Vreken P."/>
            <person name="Wang H."/>
            <person name="Warmington J.R."/>
            <person name="von Wettstein D."/>
            <person name="Wicksteed B.L."/>
            <person name="Wilson C."/>
            <person name="Wurst H."/>
            <person name="Xu G."/>
            <person name="Yoshikawa A."/>
            <person name="Zimmermann F.K."/>
            <person name="Sgouros J.G."/>
        </authorList>
    </citation>
    <scope>NUCLEOTIDE SEQUENCE [LARGE SCALE GENOMIC DNA]</scope>
    <source>
        <strain>ATCC 204508 / S288c</strain>
    </source>
</reference>
<reference key="2">
    <citation type="journal article" date="2014" name="G3 (Bethesda)">
        <title>The reference genome sequence of Saccharomyces cerevisiae: Then and now.</title>
        <authorList>
            <person name="Engel S.R."/>
            <person name="Dietrich F.S."/>
            <person name="Fisk D.G."/>
            <person name="Binkley G."/>
            <person name="Balakrishnan R."/>
            <person name="Costanzo M.C."/>
            <person name="Dwight S.S."/>
            <person name="Hitz B.C."/>
            <person name="Karra K."/>
            <person name="Nash R.S."/>
            <person name="Weng S."/>
            <person name="Wong E.D."/>
            <person name="Lloyd P."/>
            <person name="Skrzypek M.S."/>
            <person name="Miyasato S.R."/>
            <person name="Simison M."/>
            <person name="Cherry J.M."/>
        </authorList>
    </citation>
    <scope>GENOME REANNOTATION</scope>
    <source>
        <strain>ATCC 204508 / S288c</strain>
    </source>
</reference>
<reference key="3">
    <citation type="journal article" date="2007" name="Genome Res.">
        <title>Approaching a complete repository of sequence-verified protein-encoding clones for Saccharomyces cerevisiae.</title>
        <authorList>
            <person name="Hu Y."/>
            <person name="Rolfs A."/>
            <person name="Bhullar B."/>
            <person name="Murthy T.V.S."/>
            <person name="Zhu C."/>
            <person name="Berger M.F."/>
            <person name="Camargo A.A."/>
            <person name="Kelley F."/>
            <person name="McCarron S."/>
            <person name="Jepson D."/>
            <person name="Richardson A."/>
            <person name="Raphael J."/>
            <person name="Moreira D."/>
            <person name="Taycher E."/>
            <person name="Zuo D."/>
            <person name="Mohr S."/>
            <person name="Kane M.F."/>
            <person name="Williamson J."/>
            <person name="Simpson A.J.G."/>
            <person name="Bulyk M.L."/>
            <person name="Harlow E."/>
            <person name="Marsischky G."/>
            <person name="Kolodner R.D."/>
            <person name="LaBaer J."/>
        </authorList>
    </citation>
    <scope>NUCLEOTIDE SEQUENCE [GENOMIC DNA] OF 1-121</scope>
    <source>
        <strain>ATCC 204508 / S288c</strain>
    </source>
</reference>
<reference key="4">
    <citation type="journal article" date="2002" name="Eur. J. Biochem.">
        <title>Tag-mediated isolation of yeast mitochondrial ribosome and mass spectrometric identification of its new components.</title>
        <authorList>
            <person name="Gan X."/>
            <person name="Kitakawa M."/>
            <person name="Yoshino K."/>
            <person name="Oshiro N."/>
            <person name="Yonezawa K."/>
            <person name="Isono K."/>
        </authorList>
    </citation>
    <scope>IDENTIFICATION IN THE MITOCHONDRIAL RIBOSOMAL LARGE COMPLEX</scope>
    <scope>IDENTIFICATION BY MASS SPECTROMETRY</scope>
</reference>
<reference key="5">
    <citation type="journal article" date="2003" name="Nature">
        <title>Global analysis of protein localization in budding yeast.</title>
        <authorList>
            <person name="Huh W.-K."/>
            <person name="Falvo J.V."/>
            <person name="Gerke L.C."/>
            <person name="Carroll A.S."/>
            <person name="Howson R.W."/>
            <person name="Weissman J.S."/>
            <person name="O'Shea E.K."/>
        </authorList>
    </citation>
    <scope>SUBCELLULAR LOCATION [LARGE SCALE ANALYSIS]</scope>
</reference>
<reference key="6">
    <citation type="journal article" date="2003" name="Nature">
        <title>Global analysis of protein expression in yeast.</title>
        <authorList>
            <person name="Ghaemmaghami S."/>
            <person name="Huh W.-K."/>
            <person name="Bower K."/>
            <person name="Howson R.W."/>
            <person name="Belle A."/>
            <person name="Dephoure N."/>
            <person name="O'Shea E.K."/>
            <person name="Weissman J.S."/>
        </authorList>
    </citation>
    <scope>LEVEL OF PROTEIN EXPRESSION [LARGE SCALE ANALYSIS]</scope>
</reference>
<reference key="7">
    <citation type="journal article" date="2003" name="Proc. Natl. Acad. Sci. U.S.A.">
        <title>The proteome of Saccharomyces cerevisiae mitochondria.</title>
        <authorList>
            <person name="Sickmann A."/>
            <person name="Reinders J."/>
            <person name="Wagner Y."/>
            <person name="Joppich C."/>
            <person name="Zahedi R.P."/>
            <person name="Meyer H.E."/>
            <person name="Schoenfisch B."/>
            <person name="Perschil I."/>
            <person name="Chacinska A."/>
            <person name="Guiard B."/>
            <person name="Rehling P."/>
            <person name="Pfanner N."/>
            <person name="Meisinger C."/>
        </authorList>
    </citation>
    <scope>SUBCELLULAR LOCATION [LARGE SCALE ANALYSIS]</scope>
    <source>
        <strain>ATCC 76625 / YPH499</strain>
    </source>
</reference>
<reference key="8">
    <citation type="journal article" date="2015" name="Nat. Commun.">
        <title>Organization of the mitochondrial translation machinery studied in situ by cryoelectron tomography.</title>
        <authorList>
            <person name="Pfeffer S."/>
            <person name="Woellhaf M.W."/>
            <person name="Herrmann J.M."/>
            <person name="Forster F."/>
        </authorList>
    </citation>
    <scope>SUBCELLULAR LOCATION</scope>
</reference>
<reference key="9">
    <citation type="journal article" date="2014" name="Science">
        <title>Structure of the yeast mitochondrial large ribosomal subunit.</title>
        <authorList>
            <person name="Amunts A."/>
            <person name="Brown A."/>
            <person name="Bai X.C."/>
            <person name="Llacer J.L."/>
            <person name="Hussain T."/>
            <person name="Emsley P."/>
            <person name="Long F."/>
            <person name="Murshudov G."/>
            <person name="Scheres S.H."/>
            <person name="Ramakrishnan V."/>
        </authorList>
    </citation>
    <scope>STRUCTURE BY ELECTRON MICROSCOPY (3.20 ANGSTROMS)</scope>
    <scope>SUBUNIT</scope>
</reference>
<protein>
    <recommendedName>
        <fullName evidence="8">Large ribosomal subunit protein mL49</fullName>
    </recommendedName>
    <alternativeName>
        <fullName>54S ribosomal protein IMG2, mitochondrial</fullName>
    </alternativeName>
    <alternativeName>
        <fullName>Integrity of mitochondrial genome protein 2</fullName>
    </alternativeName>
</protein>
<proteinExistence type="evidence at protein level"/>
<organism>
    <name type="scientific">Saccharomyces cerevisiae (strain ATCC 204508 / S288c)</name>
    <name type="common">Baker's yeast</name>
    <dbReference type="NCBI Taxonomy" id="559292"/>
    <lineage>
        <taxon>Eukaryota</taxon>
        <taxon>Fungi</taxon>
        <taxon>Dikarya</taxon>
        <taxon>Ascomycota</taxon>
        <taxon>Saccharomycotina</taxon>
        <taxon>Saccharomycetes</taxon>
        <taxon>Saccharomycetales</taxon>
        <taxon>Saccharomycetaceae</taxon>
        <taxon>Saccharomyces</taxon>
    </lineage>
</organism>
<accession>P25642</accession>
<accession>D6VR73</accession>
<accession>Q6B2B0</accession>
<accession>Q96VG7</accession>
<dbReference type="EMBL" id="X59720">
    <property type="protein sequence ID" value="CAC42988.1"/>
    <property type="molecule type" value="Genomic_DNA"/>
</dbReference>
<dbReference type="EMBL" id="AY692820">
    <property type="protein sequence ID" value="AAT92839.1"/>
    <property type="molecule type" value="Genomic_DNA"/>
</dbReference>
<dbReference type="EMBL" id="BK006937">
    <property type="protein sequence ID" value="DAA07542.1"/>
    <property type="molecule type" value="Genomic_DNA"/>
</dbReference>
<dbReference type="PIR" id="S19486">
    <property type="entry name" value="S19486"/>
</dbReference>
<dbReference type="RefSeq" id="NP_009996.2">
    <property type="nucleotide sequence ID" value="NM_001178781.1"/>
</dbReference>
<dbReference type="PDB" id="3J6B">
    <property type="method" value="EM"/>
    <property type="resolution" value="3.20 A"/>
    <property type="chains" value="7=1-146"/>
</dbReference>
<dbReference type="PDB" id="5MRC">
    <property type="method" value="EM"/>
    <property type="resolution" value="3.25 A"/>
    <property type="chains" value="7=41-146"/>
</dbReference>
<dbReference type="PDB" id="5MRE">
    <property type="method" value="EM"/>
    <property type="resolution" value="3.75 A"/>
    <property type="chains" value="7=41-146"/>
</dbReference>
<dbReference type="PDB" id="5MRF">
    <property type="method" value="EM"/>
    <property type="resolution" value="4.97 A"/>
    <property type="chains" value="7=41-146"/>
</dbReference>
<dbReference type="PDBsum" id="3J6B"/>
<dbReference type="PDBsum" id="5MRC"/>
<dbReference type="PDBsum" id="5MRE"/>
<dbReference type="PDBsum" id="5MRF"/>
<dbReference type="EMDB" id="EMD-3551"/>
<dbReference type="EMDB" id="EMD-3552"/>
<dbReference type="EMDB" id="EMD-3553"/>
<dbReference type="SMR" id="P25642"/>
<dbReference type="BioGRID" id="31046">
    <property type="interactions" value="436"/>
</dbReference>
<dbReference type="ComplexPortal" id="CPX-1602">
    <property type="entry name" value="54S mitochondrial large ribosomal subunit"/>
</dbReference>
<dbReference type="DIP" id="DIP-6696N"/>
<dbReference type="FunCoup" id="P25642">
    <property type="interactions" value="187"/>
</dbReference>
<dbReference type="IntAct" id="P25642">
    <property type="interactions" value="66"/>
</dbReference>
<dbReference type="MINT" id="P25642"/>
<dbReference type="STRING" id="4932.YCR071C"/>
<dbReference type="PaxDb" id="4932-YCR071C"/>
<dbReference type="PeptideAtlas" id="P25642"/>
<dbReference type="EnsemblFungi" id="YCR071C_mRNA">
    <property type="protein sequence ID" value="YCR071C"/>
    <property type="gene ID" value="YCR071C"/>
</dbReference>
<dbReference type="GeneID" id="850434"/>
<dbReference type="KEGG" id="sce:YCR071C"/>
<dbReference type="AGR" id="SGD:S000000667"/>
<dbReference type="SGD" id="S000000667">
    <property type="gene designation" value="IMG2"/>
</dbReference>
<dbReference type="VEuPathDB" id="FungiDB:YCR071C"/>
<dbReference type="eggNOG" id="KOG4034">
    <property type="taxonomic scope" value="Eukaryota"/>
</dbReference>
<dbReference type="HOGENOM" id="CLU_132729_1_0_1"/>
<dbReference type="InParanoid" id="P25642"/>
<dbReference type="OMA" id="TVETHSH"/>
<dbReference type="OrthoDB" id="19439at2759"/>
<dbReference type="BioCyc" id="YEAST:G3O-29371-MONOMER"/>
<dbReference type="BioGRID-ORCS" id="850434">
    <property type="hits" value="3 hits in 10 CRISPR screens"/>
</dbReference>
<dbReference type="PRO" id="PR:P25642"/>
<dbReference type="Proteomes" id="UP000002311">
    <property type="component" value="Chromosome III"/>
</dbReference>
<dbReference type="RNAct" id="P25642">
    <property type="molecule type" value="protein"/>
</dbReference>
<dbReference type="GO" id="GO:0005743">
    <property type="term" value="C:mitochondrial inner membrane"/>
    <property type="evidence" value="ECO:0000303"/>
    <property type="project" value="ComplexPortal"/>
</dbReference>
<dbReference type="GO" id="GO:0005762">
    <property type="term" value="C:mitochondrial large ribosomal subunit"/>
    <property type="evidence" value="ECO:0000314"/>
    <property type="project" value="SGD"/>
</dbReference>
<dbReference type="GO" id="GO:0005739">
    <property type="term" value="C:mitochondrion"/>
    <property type="evidence" value="ECO:0007005"/>
    <property type="project" value="SGD"/>
</dbReference>
<dbReference type="GO" id="GO:0003735">
    <property type="term" value="F:structural constituent of ribosome"/>
    <property type="evidence" value="ECO:0000314"/>
    <property type="project" value="SGD"/>
</dbReference>
<dbReference type="GO" id="GO:0032543">
    <property type="term" value="P:mitochondrial translation"/>
    <property type="evidence" value="ECO:0000303"/>
    <property type="project" value="ComplexPortal"/>
</dbReference>
<dbReference type="FunFam" id="3.30.780.10:FF:000020">
    <property type="entry name" value="60S ribosomal protein IMG2, mitochondrial"/>
    <property type="match status" value="1"/>
</dbReference>
<dbReference type="Gene3D" id="3.30.780.10">
    <property type="entry name" value="SUI1-like domain"/>
    <property type="match status" value="1"/>
</dbReference>
<dbReference type="InterPro" id="IPR007740">
    <property type="entry name" value="Ribosomal_mL49"/>
</dbReference>
<dbReference type="PANTHER" id="PTHR13477:SF0">
    <property type="entry name" value="LARGE RIBOSOMAL SUBUNIT PROTEIN ML49"/>
    <property type="match status" value="1"/>
</dbReference>
<dbReference type="PANTHER" id="PTHR13477">
    <property type="entry name" value="MITOCHONDRIAL 39S RIBOSOMAL PROTEIN L49"/>
    <property type="match status" value="1"/>
</dbReference>
<dbReference type="Pfam" id="PF05046">
    <property type="entry name" value="Img2"/>
    <property type="match status" value="1"/>
</dbReference>
<feature type="transit peptide" description="Mitochondrion" evidence="1">
    <location>
        <begin position="1"/>
        <end position="38"/>
    </location>
</feature>
<feature type="chain" id="PRO_0000030537" description="Large ribosomal subunit protein mL49">
    <location>
        <begin position="39"/>
        <end position="146"/>
    </location>
</feature>
<feature type="sequence conflict" description="In Ref. 3; AAT92839." evidence="9" ref="3">
    <original>SV</original>
    <variation>LW</variation>
    <location>
        <begin position="120"/>
        <end position="121"/>
    </location>
</feature>
<evidence type="ECO:0000255" key="1"/>
<evidence type="ECO:0000269" key="2">
    <source>
    </source>
</evidence>
<evidence type="ECO:0000269" key="3">
    <source>
    </source>
</evidence>
<evidence type="ECO:0000269" key="4">
    <source>
    </source>
</evidence>
<evidence type="ECO:0000269" key="5">
    <source>
    </source>
</evidence>
<evidence type="ECO:0000269" key="6">
    <source>
    </source>
</evidence>
<evidence type="ECO:0000269" key="7">
    <source>
    </source>
</evidence>
<evidence type="ECO:0000303" key="8">
    <source>
    </source>
</evidence>
<evidence type="ECO:0000305" key="9"/>
<evidence type="ECO:0000305" key="10">
    <source>
    </source>
</evidence>
<evidence type="ECO:0000305" key="11">
    <source>
    </source>
</evidence>
<name>IMG2_YEAST</name>
<gene>
    <name type="primary">IMG2</name>
    <name type="ordered locus">YCR071C</name>
    <name type="ORF">YCR71C</name>
</gene>
<keyword id="KW-0002">3D-structure</keyword>
<keyword id="KW-0496">Mitochondrion</keyword>
<keyword id="KW-1185">Reference proteome</keyword>
<keyword id="KW-0687">Ribonucleoprotein</keyword>
<keyword id="KW-0689">Ribosomal protein</keyword>
<keyword id="KW-0809">Transit peptide</keyword>
<comment type="function">
    <text evidence="10 11">Component of the mitochondrial ribosome (mitoribosome), a dedicated translation machinery responsible for the synthesis of mitochondrial genome-encoded proteins, including at least some of the essential transmembrane subunits of the mitochondrial respiratory chain. The mitoribosomes are attached to the mitochondrial inner membrane and translation products are cotranslationally integrated into the membrane.</text>
</comment>
<comment type="subunit">
    <text evidence="2 6">Component of the mitochondrial large ribosomal subunit (mt-LSU). Mature yeast 74S mitochondrial ribosomes consist of a small (37S) and a large (54S) subunit. The 37S small subunit contains a 15S ribosomal RNA (15S mt-rRNA) and 34 different proteins. The 54S large subunit contains a 21S rRNA (21S mt-rRNA) and 46 different proteins.</text>
</comment>
<comment type="subcellular location">
    <subcellularLocation>
        <location evidence="3 5">Mitochondrion</location>
    </subcellularLocation>
    <text evidence="7">Mitoribosomes are tethered to the mitochondrial inner membrane and spatially aligned with the membrane insertion machinery through two distinct membrane contact sites, formed by the 21S rRNA expansion segment 96-ES1 and the inner membrane protein MBA1.</text>
</comment>
<comment type="miscellaneous">
    <text evidence="4">Present with 1700 molecules/cell in log phase SD medium.</text>
</comment>
<comment type="similarity">
    <text evidence="9">Belongs to the mitochondrion-specific ribosomal protein mL49 family.</text>
</comment>